<comment type="function">
    <text evidence="1">Nucleoside triphosphate pyrophosphatase. May have a dual role in cell division arrest and in preventing the incorporation of modified nucleotides into cellular nucleic acids.</text>
</comment>
<comment type="catalytic activity">
    <reaction evidence="1">
        <text>a ribonucleoside 5'-triphosphate + H2O = a ribonucleoside 5'-phosphate + diphosphate + H(+)</text>
        <dbReference type="Rhea" id="RHEA:23996"/>
        <dbReference type="ChEBI" id="CHEBI:15377"/>
        <dbReference type="ChEBI" id="CHEBI:15378"/>
        <dbReference type="ChEBI" id="CHEBI:33019"/>
        <dbReference type="ChEBI" id="CHEBI:58043"/>
        <dbReference type="ChEBI" id="CHEBI:61557"/>
        <dbReference type="EC" id="3.6.1.9"/>
    </reaction>
</comment>
<comment type="catalytic activity">
    <reaction evidence="1">
        <text>a 2'-deoxyribonucleoside 5'-triphosphate + H2O = a 2'-deoxyribonucleoside 5'-phosphate + diphosphate + H(+)</text>
        <dbReference type="Rhea" id="RHEA:44644"/>
        <dbReference type="ChEBI" id="CHEBI:15377"/>
        <dbReference type="ChEBI" id="CHEBI:15378"/>
        <dbReference type="ChEBI" id="CHEBI:33019"/>
        <dbReference type="ChEBI" id="CHEBI:61560"/>
        <dbReference type="ChEBI" id="CHEBI:65317"/>
        <dbReference type="EC" id="3.6.1.9"/>
    </reaction>
</comment>
<comment type="cofactor">
    <cofactor evidence="1">
        <name>a divalent metal cation</name>
        <dbReference type="ChEBI" id="CHEBI:60240"/>
    </cofactor>
</comment>
<comment type="subcellular location">
    <subcellularLocation>
        <location evidence="1">Cytoplasm</location>
    </subcellularLocation>
</comment>
<comment type="similarity">
    <text evidence="1">Belongs to the Maf family.</text>
</comment>
<protein>
    <recommendedName>
        <fullName evidence="1">Nucleoside triphosphate pyrophosphatase</fullName>
        <ecNumber evidence="1">3.6.1.9</ecNumber>
    </recommendedName>
    <alternativeName>
        <fullName evidence="1">Nucleotide pyrophosphatase</fullName>
        <shortName evidence="1">Nucleotide PPase</shortName>
    </alternativeName>
</protein>
<dbReference type="EC" id="3.6.1.9" evidence="1"/>
<dbReference type="EMBL" id="CP000825">
    <property type="protein sequence ID" value="ABV50980.1"/>
    <property type="molecule type" value="Genomic_DNA"/>
</dbReference>
<dbReference type="RefSeq" id="WP_012008035.1">
    <property type="nucleotide sequence ID" value="NC_009840.1"/>
</dbReference>
<dbReference type="SMR" id="A8G5U9"/>
<dbReference type="STRING" id="93060.P9215_13651"/>
<dbReference type="KEGG" id="pmh:P9215_13651"/>
<dbReference type="eggNOG" id="COG0424">
    <property type="taxonomic scope" value="Bacteria"/>
</dbReference>
<dbReference type="HOGENOM" id="CLU_040416_1_2_3"/>
<dbReference type="OrthoDB" id="9807767at2"/>
<dbReference type="Proteomes" id="UP000002014">
    <property type="component" value="Chromosome"/>
</dbReference>
<dbReference type="GO" id="GO:0005737">
    <property type="term" value="C:cytoplasm"/>
    <property type="evidence" value="ECO:0007669"/>
    <property type="project" value="UniProtKB-SubCell"/>
</dbReference>
<dbReference type="GO" id="GO:0047429">
    <property type="term" value="F:nucleoside triphosphate diphosphatase activity"/>
    <property type="evidence" value="ECO:0007669"/>
    <property type="project" value="UniProtKB-EC"/>
</dbReference>
<dbReference type="GO" id="GO:0009117">
    <property type="term" value="P:nucleotide metabolic process"/>
    <property type="evidence" value="ECO:0007669"/>
    <property type="project" value="UniProtKB-KW"/>
</dbReference>
<dbReference type="CDD" id="cd00555">
    <property type="entry name" value="Maf"/>
    <property type="match status" value="1"/>
</dbReference>
<dbReference type="Gene3D" id="3.90.950.10">
    <property type="match status" value="1"/>
</dbReference>
<dbReference type="HAMAP" id="MF_00528">
    <property type="entry name" value="Maf"/>
    <property type="match status" value="1"/>
</dbReference>
<dbReference type="InterPro" id="IPR029001">
    <property type="entry name" value="ITPase-like_fam"/>
</dbReference>
<dbReference type="InterPro" id="IPR003697">
    <property type="entry name" value="Maf-like"/>
</dbReference>
<dbReference type="NCBIfam" id="TIGR00172">
    <property type="entry name" value="maf"/>
    <property type="match status" value="1"/>
</dbReference>
<dbReference type="PANTHER" id="PTHR43213">
    <property type="entry name" value="BIFUNCTIONAL DTTP/UTP PYROPHOSPHATASE/METHYLTRANSFERASE PROTEIN-RELATED"/>
    <property type="match status" value="1"/>
</dbReference>
<dbReference type="PANTHER" id="PTHR43213:SF5">
    <property type="entry name" value="BIFUNCTIONAL DTTP_UTP PYROPHOSPHATASE_METHYLTRANSFERASE PROTEIN-RELATED"/>
    <property type="match status" value="1"/>
</dbReference>
<dbReference type="Pfam" id="PF02545">
    <property type="entry name" value="Maf"/>
    <property type="match status" value="1"/>
</dbReference>
<dbReference type="PIRSF" id="PIRSF006305">
    <property type="entry name" value="Maf"/>
    <property type="match status" value="1"/>
</dbReference>
<dbReference type="SUPFAM" id="SSF52972">
    <property type="entry name" value="ITPase-like"/>
    <property type="match status" value="1"/>
</dbReference>
<keyword id="KW-0963">Cytoplasm</keyword>
<keyword id="KW-0378">Hydrolase</keyword>
<keyword id="KW-0546">Nucleotide metabolism</keyword>
<sequence>MLILASASQSRKKLLENCQIEFIQISSNFDETTIQEKNIFNLALELSFQKANSLSENIQNISLPEEFNYGPLEILGCDSIFEFKGEAYGKPSNKEEAFIRWKKMSGEFGFLHTGHTLIIGHFDSTSKIFKITEIIKKTVSSRVYFSKLEDWEIKSYVDTNEPLYCAGGFALEGIGGKYIEKIEGCFSNVMGLSLPWLRENLYRS</sequence>
<reference key="1">
    <citation type="journal article" date="2007" name="PLoS Genet.">
        <title>Patterns and implications of gene gain and loss in the evolution of Prochlorococcus.</title>
        <authorList>
            <person name="Kettler G.C."/>
            <person name="Martiny A.C."/>
            <person name="Huang K."/>
            <person name="Zucker J."/>
            <person name="Coleman M.L."/>
            <person name="Rodrigue S."/>
            <person name="Chen F."/>
            <person name="Lapidus A."/>
            <person name="Ferriera S."/>
            <person name="Johnson J."/>
            <person name="Steglich C."/>
            <person name="Church G.M."/>
            <person name="Richardson P."/>
            <person name="Chisholm S.W."/>
        </authorList>
    </citation>
    <scope>NUCLEOTIDE SEQUENCE [LARGE SCALE GENOMIC DNA]</scope>
    <source>
        <strain>MIT 9215</strain>
    </source>
</reference>
<name>NTPP_PROM2</name>
<accession>A8G5U9</accession>
<organism>
    <name type="scientific">Prochlorococcus marinus (strain MIT 9215)</name>
    <dbReference type="NCBI Taxonomy" id="93060"/>
    <lineage>
        <taxon>Bacteria</taxon>
        <taxon>Bacillati</taxon>
        <taxon>Cyanobacteriota</taxon>
        <taxon>Cyanophyceae</taxon>
        <taxon>Synechococcales</taxon>
        <taxon>Prochlorococcaceae</taxon>
        <taxon>Prochlorococcus</taxon>
    </lineage>
</organism>
<feature type="chain" id="PRO_1000060956" description="Nucleoside triphosphate pyrophosphatase">
    <location>
        <begin position="1"/>
        <end position="204"/>
    </location>
</feature>
<feature type="active site" description="Proton acceptor" evidence="1">
    <location>
        <position position="78"/>
    </location>
</feature>
<gene>
    <name type="ordered locus">P9215_13651</name>
</gene>
<evidence type="ECO:0000255" key="1">
    <source>
        <dbReference type="HAMAP-Rule" id="MF_00528"/>
    </source>
</evidence>
<proteinExistence type="inferred from homology"/>